<proteinExistence type="inferred from homology"/>
<evidence type="ECO:0000255" key="1">
    <source>
        <dbReference type="HAMAP-Rule" id="MF_01818"/>
    </source>
</evidence>
<accession>B7MG36</accession>
<feature type="chain" id="PRO_1000187953" description="Ribonuclease BN">
    <location>
        <begin position="1"/>
        <end position="305"/>
    </location>
</feature>
<feature type="active site" description="Proton acceptor" evidence="1">
    <location>
        <position position="68"/>
    </location>
</feature>
<feature type="binding site" evidence="1">
    <location>
        <position position="64"/>
    </location>
    <ligand>
        <name>Zn(2+)</name>
        <dbReference type="ChEBI" id="CHEBI:29105"/>
        <label>1</label>
        <note>catalytic</note>
    </ligand>
</feature>
<feature type="binding site" evidence="1">
    <location>
        <position position="66"/>
    </location>
    <ligand>
        <name>Zn(2+)</name>
        <dbReference type="ChEBI" id="CHEBI:29105"/>
        <label>1</label>
        <note>catalytic</note>
    </ligand>
</feature>
<feature type="binding site" evidence="1">
    <location>
        <position position="68"/>
    </location>
    <ligand>
        <name>Zn(2+)</name>
        <dbReference type="ChEBI" id="CHEBI:29105"/>
        <label>2</label>
        <note>catalytic</note>
    </ligand>
</feature>
<feature type="binding site" evidence="1">
    <location>
        <position position="69"/>
    </location>
    <ligand>
        <name>Zn(2+)</name>
        <dbReference type="ChEBI" id="CHEBI:29105"/>
        <label>2</label>
        <note>catalytic</note>
    </ligand>
</feature>
<feature type="binding site" evidence="1">
    <location>
        <position position="141"/>
    </location>
    <ligand>
        <name>Zn(2+)</name>
        <dbReference type="ChEBI" id="CHEBI:29105"/>
        <label>1</label>
        <note>catalytic</note>
    </ligand>
</feature>
<feature type="binding site" evidence="1">
    <location>
        <position position="212"/>
    </location>
    <ligand>
        <name>Zn(2+)</name>
        <dbReference type="ChEBI" id="CHEBI:29105"/>
        <label>1</label>
        <note>catalytic</note>
    </ligand>
</feature>
<feature type="binding site" evidence="1">
    <location>
        <position position="212"/>
    </location>
    <ligand>
        <name>Zn(2+)</name>
        <dbReference type="ChEBI" id="CHEBI:29105"/>
        <label>2</label>
        <note>catalytic</note>
    </ligand>
</feature>
<feature type="binding site" evidence="1">
    <location>
        <position position="270"/>
    </location>
    <ligand>
        <name>Zn(2+)</name>
        <dbReference type="ChEBI" id="CHEBI:29105"/>
        <label>2</label>
        <note>catalytic</note>
    </ligand>
</feature>
<sequence length="305" mass="32964">MELIFLGTSAGVPTRTRNVTAILLNLQHPTQSGLWLFDCGEGTQHQLLHTAFNPGKLDKIFISHLHGDHLFGLPGLLCSRSMSGIIQPLTIYGPHGIREFVETALRISGSWTDYPLEIVEIGAGEIFDDGLRKVTAYPMEHPLECYGYRIEEHDKPGALNAQALKAAGVPPGPLFQELKAGKTIMLDDGRQINGADYLAVPVPGKALAIFGDTGPCDAALELAKGVDVMVHEATLDMAMEAKANSRGHSSTRQAAALAREAGVGKLIITHVSSRYDDKGCQHLLRECRSIFPATELANDFAVFSI</sequence>
<gene>
    <name evidence="1" type="primary">rbn</name>
    <name type="synonym">rnz</name>
    <name type="ordered locus">ECS88_2419</name>
</gene>
<dbReference type="EC" id="3.1.-.-" evidence="1"/>
<dbReference type="EMBL" id="CU928161">
    <property type="protein sequence ID" value="CAR03698.1"/>
    <property type="molecule type" value="Genomic_DNA"/>
</dbReference>
<dbReference type="RefSeq" id="WP_000420115.1">
    <property type="nucleotide sequence ID" value="NC_011742.1"/>
</dbReference>
<dbReference type="SMR" id="B7MG36"/>
<dbReference type="KEGG" id="ecz:ECS88_2419"/>
<dbReference type="HOGENOM" id="CLU_031317_2_0_6"/>
<dbReference type="Proteomes" id="UP000000747">
    <property type="component" value="Chromosome"/>
</dbReference>
<dbReference type="GO" id="GO:0042781">
    <property type="term" value="F:3'-tRNA processing endoribonuclease activity"/>
    <property type="evidence" value="ECO:0007669"/>
    <property type="project" value="TreeGrafter"/>
</dbReference>
<dbReference type="GO" id="GO:0004527">
    <property type="term" value="F:exonuclease activity"/>
    <property type="evidence" value="ECO:0007669"/>
    <property type="project" value="UniProtKB-UniRule"/>
</dbReference>
<dbReference type="GO" id="GO:0008270">
    <property type="term" value="F:zinc ion binding"/>
    <property type="evidence" value="ECO:0007669"/>
    <property type="project" value="UniProtKB-UniRule"/>
</dbReference>
<dbReference type="CDD" id="cd07717">
    <property type="entry name" value="RNaseZ_ZiPD-like_MBL-fold"/>
    <property type="match status" value="1"/>
</dbReference>
<dbReference type="FunFam" id="3.60.15.10:FF:000002">
    <property type="entry name" value="Ribonuclease Z"/>
    <property type="match status" value="1"/>
</dbReference>
<dbReference type="Gene3D" id="3.60.15.10">
    <property type="entry name" value="Ribonuclease Z/Hydroxyacylglutathione hydrolase-like"/>
    <property type="match status" value="1"/>
</dbReference>
<dbReference type="HAMAP" id="MF_01818">
    <property type="entry name" value="RNase_Z_BN"/>
    <property type="match status" value="1"/>
</dbReference>
<dbReference type="InterPro" id="IPR001279">
    <property type="entry name" value="Metallo-B-lactamas"/>
</dbReference>
<dbReference type="InterPro" id="IPR036866">
    <property type="entry name" value="RibonucZ/Hydroxyglut_hydro"/>
</dbReference>
<dbReference type="InterPro" id="IPR013469">
    <property type="entry name" value="Rnase_BN"/>
</dbReference>
<dbReference type="InterPro" id="IPR013471">
    <property type="entry name" value="RNase_Z/BN"/>
</dbReference>
<dbReference type="NCBIfam" id="NF000800">
    <property type="entry name" value="PRK00055.1-1"/>
    <property type="match status" value="1"/>
</dbReference>
<dbReference type="NCBIfam" id="NF000801">
    <property type="entry name" value="PRK00055.1-3"/>
    <property type="match status" value="1"/>
</dbReference>
<dbReference type="NCBIfam" id="TIGR02651">
    <property type="entry name" value="RNase_Z"/>
    <property type="match status" value="1"/>
</dbReference>
<dbReference type="NCBIfam" id="TIGR02649">
    <property type="entry name" value="true_RNase_BN"/>
    <property type="match status" value="1"/>
</dbReference>
<dbReference type="PANTHER" id="PTHR46018">
    <property type="entry name" value="ZINC PHOSPHODIESTERASE ELAC PROTEIN 1"/>
    <property type="match status" value="1"/>
</dbReference>
<dbReference type="PANTHER" id="PTHR46018:SF2">
    <property type="entry name" value="ZINC PHOSPHODIESTERASE ELAC PROTEIN 1"/>
    <property type="match status" value="1"/>
</dbReference>
<dbReference type="Pfam" id="PF12706">
    <property type="entry name" value="Lactamase_B_2"/>
    <property type="match status" value="2"/>
</dbReference>
<dbReference type="SMART" id="SM00849">
    <property type="entry name" value="Lactamase_B"/>
    <property type="match status" value="1"/>
</dbReference>
<dbReference type="SUPFAM" id="SSF56281">
    <property type="entry name" value="Metallo-hydrolase/oxidoreductase"/>
    <property type="match status" value="1"/>
</dbReference>
<reference key="1">
    <citation type="journal article" date="2009" name="PLoS Genet.">
        <title>Organised genome dynamics in the Escherichia coli species results in highly diverse adaptive paths.</title>
        <authorList>
            <person name="Touchon M."/>
            <person name="Hoede C."/>
            <person name="Tenaillon O."/>
            <person name="Barbe V."/>
            <person name="Baeriswyl S."/>
            <person name="Bidet P."/>
            <person name="Bingen E."/>
            <person name="Bonacorsi S."/>
            <person name="Bouchier C."/>
            <person name="Bouvet O."/>
            <person name="Calteau A."/>
            <person name="Chiapello H."/>
            <person name="Clermont O."/>
            <person name="Cruveiller S."/>
            <person name="Danchin A."/>
            <person name="Diard M."/>
            <person name="Dossat C."/>
            <person name="Karoui M.E."/>
            <person name="Frapy E."/>
            <person name="Garry L."/>
            <person name="Ghigo J.M."/>
            <person name="Gilles A.M."/>
            <person name="Johnson J."/>
            <person name="Le Bouguenec C."/>
            <person name="Lescat M."/>
            <person name="Mangenot S."/>
            <person name="Martinez-Jehanne V."/>
            <person name="Matic I."/>
            <person name="Nassif X."/>
            <person name="Oztas S."/>
            <person name="Petit M.A."/>
            <person name="Pichon C."/>
            <person name="Rouy Z."/>
            <person name="Ruf C.S."/>
            <person name="Schneider D."/>
            <person name="Tourret J."/>
            <person name="Vacherie B."/>
            <person name="Vallenet D."/>
            <person name="Medigue C."/>
            <person name="Rocha E.P.C."/>
            <person name="Denamur E."/>
        </authorList>
    </citation>
    <scope>NUCLEOTIDE SEQUENCE [LARGE SCALE GENOMIC DNA]</scope>
    <source>
        <strain>S88 / ExPEC</strain>
    </source>
</reference>
<keyword id="KW-0255">Endonuclease</keyword>
<keyword id="KW-0269">Exonuclease</keyword>
<keyword id="KW-0378">Hydrolase</keyword>
<keyword id="KW-0479">Metal-binding</keyword>
<keyword id="KW-0540">Nuclease</keyword>
<keyword id="KW-1185">Reference proteome</keyword>
<keyword id="KW-0819">tRNA processing</keyword>
<keyword id="KW-0862">Zinc</keyword>
<protein>
    <recommendedName>
        <fullName evidence="1">Ribonuclease BN</fullName>
        <shortName evidence="1">RNase BN</shortName>
        <ecNumber evidence="1">3.1.-.-</ecNumber>
    </recommendedName>
    <alternativeName>
        <fullName evidence="1">Ribonuclease Z homolog</fullName>
        <shortName evidence="1">RNase Z homolog</shortName>
    </alternativeName>
</protein>
<comment type="function">
    <text evidence="1">Zinc phosphodiesterase, which has both exoribonuclease and endoribonuclease activities.</text>
</comment>
<comment type="cofactor">
    <cofactor evidence="1">
        <name>Zn(2+)</name>
        <dbReference type="ChEBI" id="CHEBI:29105"/>
    </cofactor>
    <text evidence="1">Binds 2 Zn(2+) ions.</text>
</comment>
<comment type="subunit">
    <text evidence="1">Homodimer.</text>
</comment>
<comment type="similarity">
    <text evidence="1">Belongs to the RNase Z family. RNase BN subfamily.</text>
</comment>
<name>RBN_ECO45</name>
<organism>
    <name type="scientific">Escherichia coli O45:K1 (strain S88 / ExPEC)</name>
    <dbReference type="NCBI Taxonomy" id="585035"/>
    <lineage>
        <taxon>Bacteria</taxon>
        <taxon>Pseudomonadati</taxon>
        <taxon>Pseudomonadota</taxon>
        <taxon>Gammaproteobacteria</taxon>
        <taxon>Enterobacterales</taxon>
        <taxon>Enterobacteriaceae</taxon>
        <taxon>Escherichia</taxon>
    </lineage>
</organism>